<evidence type="ECO:0000255" key="1">
    <source>
        <dbReference type="HAMAP-Rule" id="MF_01337"/>
    </source>
</evidence>
<evidence type="ECO:0000305" key="2"/>
<proteinExistence type="inferred from homology"/>
<reference key="1">
    <citation type="journal article" date="2005" name="Nat. Biotechnol.">
        <title>Complete genome sequence of the plant commensal Pseudomonas fluorescens Pf-5.</title>
        <authorList>
            <person name="Paulsen I.T."/>
            <person name="Press C.M."/>
            <person name="Ravel J."/>
            <person name="Kobayashi D.Y."/>
            <person name="Myers G.S.A."/>
            <person name="Mavrodi D.V."/>
            <person name="DeBoy R.T."/>
            <person name="Seshadri R."/>
            <person name="Ren Q."/>
            <person name="Madupu R."/>
            <person name="Dodson R.J."/>
            <person name="Durkin A.S."/>
            <person name="Brinkac L.M."/>
            <person name="Daugherty S.C."/>
            <person name="Sullivan S.A."/>
            <person name="Rosovitz M.J."/>
            <person name="Gwinn M.L."/>
            <person name="Zhou L."/>
            <person name="Schneider D.J."/>
            <person name="Cartinhour S.W."/>
            <person name="Nelson W.C."/>
            <person name="Weidman J."/>
            <person name="Watkins K."/>
            <person name="Tran K."/>
            <person name="Khouri H."/>
            <person name="Pierson E.A."/>
            <person name="Pierson L.S. III"/>
            <person name="Thomashow L.S."/>
            <person name="Loper J.E."/>
        </authorList>
    </citation>
    <scope>NUCLEOTIDE SEQUENCE [LARGE SCALE GENOMIC DNA]</scope>
    <source>
        <strain>ATCC BAA-477 / NRRL B-23932 / Pf-5</strain>
    </source>
</reference>
<sequence>MTDKKVTRLRRARKARLKMHELEVVRLCVFRSSQHIYAQVISADGNKVLASASTLDKELRDGATGNIDAATKVGQLVATRAKAAGVSQVAFDRSGFKYHGRVKALADAAREAGLEF</sequence>
<comment type="function">
    <text evidence="1">This is one of the proteins that bind and probably mediate the attachment of the 5S RNA into the large ribosomal subunit, where it forms part of the central protuberance.</text>
</comment>
<comment type="subunit">
    <text evidence="1">Part of the 50S ribosomal subunit; part of the 5S rRNA/L5/L18/L25 subcomplex. Contacts the 5S and 23S rRNAs.</text>
</comment>
<comment type="similarity">
    <text evidence="1">Belongs to the universal ribosomal protein uL18 family.</text>
</comment>
<protein>
    <recommendedName>
        <fullName evidence="1">Large ribosomal subunit protein uL18</fullName>
    </recommendedName>
    <alternativeName>
        <fullName evidence="2">50S ribosomal protein L18</fullName>
    </alternativeName>
</protein>
<dbReference type="EMBL" id="CP000076">
    <property type="protein sequence ID" value="AAY94771.1"/>
    <property type="molecule type" value="Genomic_DNA"/>
</dbReference>
<dbReference type="RefSeq" id="WP_003186037.1">
    <property type="nucleotide sequence ID" value="NC_004129.6"/>
</dbReference>
<dbReference type="SMR" id="Q4K549"/>
<dbReference type="STRING" id="220664.PFL_5566"/>
<dbReference type="GeneID" id="98113691"/>
<dbReference type="KEGG" id="pfl:PFL_5566"/>
<dbReference type="eggNOG" id="COG0256">
    <property type="taxonomic scope" value="Bacteria"/>
</dbReference>
<dbReference type="HOGENOM" id="CLU_098841_0_1_6"/>
<dbReference type="Proteomes" id="UP000008540">
    <property type="component" value="Chromosome"/>
</dbReference>
<dbReference type="GO" id="GO:0022625">
    <property type="term" value="C:cytosolic large ribosomal subunit"/>
    <property type="evidence" value="ECO:0007669"/>
    <property type="project" value="TreeGrafter"/>
</dbReference>
<dbReference type="GO" id="GO:0008097">
    <property type="term" value="F:5S rRNA binding"/>
    <property type="evidence" value="ECO:0007669"/>
    <property type="project" value="TreeGrafter"/>
</dbReference>
<dbReference type="GO" id="GO:0003735">
    <property type="term" value="F:structural constituent of ribosome"/>
    <property type="evidence" value="ECO:0007669"/>
    <property type="project" value="InterPro"/>
</dbReference>
<dbReference type="GO" id="GO:0006412">
    <property type="term" value="P:translation"/>
    <property type="evidence" value="ECO:0007669"/>
    <property type="project" value="UniProtKB-UniRule"/>
</dbReference>
<dbReference type="CDD" id="cd00432">
    <property type="entry name" value="Ribosomal_L18_L5e"/>
    <property type="match status" value="1"/>
</dbReference>
<dbReference type="FunFam" id="3.30.420.100:FF:000001">
    <property type="entry name" value="50S ribosomal protein L18"/>
    <property type="match status" value="1"/>
</dbReference>
<dbReference type="Gene3D" id="3.30.420.100">
    <property type="match status" value="1"/>
</dbReference>
<dbReference type="HAMAP" id="MF_01337_B">
    <property type="entry name" value="Ribosomal_uL18_B"/>
    <property type="match status" value="1"/>
</dbReference>
<dbReference type="InterPro" id="IPR004389">
    <property type="entry name" value="Ribosomal_uL18_bac-type"/>
</dbReference>
<dbReference type="InterPro" id="IPR005484">
    <property type="entry name" value="Ribosomal_uL18_bac/euk"/>
</dbReference>
<dbReference type="NCBIfam" id="TIGR00060">
    <property type="entry name" value="L18_bact"/>
    <property type="match status" value="1"/>
</dbReference>
<dbReference type="PANTHER" id="PTHR12899">
    <property type="entry name" value="39S RIBOSOMAL PROTEIN L18, MITOCHONDRIAL"/>
    <property type="match status" value="1"/>
</dbReference>
<dbReference type="PANTHER" id="PTHR12899:SF3">
    <property type="entry name" value="LARGE RIBOSOMAL SUBUNIT PROTEIN UL18M"/>
    <property type="match status" value="1"/>
</dbReference>
<dbReference type="Pfam" id="PF00861">
    <property type="entry name" value="Ribosomal_L18p"/>
    <property type="match status" value="1"/>
</dbReference>
<dbReference type="SUPFAM" id="SSF53137">
    <property type="entry name" value="Translational machinery components"/>
    <property type="match status" value="1"/>
</dbReference>
<accession>Q4K549</accession>
<feature type="chain" id="PRO_0000251345" description="Large ribosomal subunit protein uL18">
    <location>
        <begin position="1"/>
        <end position="116"/>
    </location>
</feature>
<name>RL18_PSEF5</name>
<organism>
    <name type="scientific">Pseudomonas fluorescens (strain ATCC BAA-477 / NRRL B-23932 / Pf-5)</name>
    <dbReference type="NCBI Taxonomy" id="220664"/>
    <lineage>
        <taxon>Bacteria</taxon>
        <taxon>Pseudomonadati</taxon>
        <taxon>Pseudomonadota</taxon>
        <taxon>Gammaproteobacteria</taxon>
        <taxon>Pseudomonadales</taxon>
        <taxon>Pseudomonadaceae</taxon>
        <taxon>Pseudomonas</taxon>
    </lineage>
</organism>
<gene>
    <name evidence="1" type="primary">rplR</name>
    <name type="ordered locus">PFL_5566</name>
</gene>
<keyword id="KW-0687">Ribonucleoprotein</keyword>
<keyword id="KW-0689">Ribosomal protein</keyword>
<keyword id="KW-0694">RNA-binding</keyword>
<keyword id="KW-0699">rRNA-binding</keyword>